<feature type="chain" id="PRO_0000076997" description="Iron-binding protein IscA">
    <location>
        <begin position="1"/>
        <end position="107"/>
    </location>
</feature>
<feature type="binding site" evidence="4">
    <location>
        <position position="35"/>
    </location>
    <ligand>
        <name>Fe cation</name>
        <dbReference type="ChEBI" id="CHEBI:24875"/>
    </ligand>
</feature>
<feature type="binding site" evidence="4">
    <location>
        <position position="99"/>
    </location>
    <ligand>
        <name>Fe cation</name>
        <dbReference type="ChEBI" id="CHEBI:24875"/>
    </ligand>
</feature>
<feature type="binding site" evidence="4">
    <location>
        <position position="101"/>
    </location>
    <ligand>
        <name>Fe cation</name>
        <dbReference type="ChEBI" id="CHEBI:24875"/>
    </ligand>
</feature>
<feature type="mutagenesis site" description="Decrease of iron binding activity." evidence="3">
    <original>C</original>
    <variation>S</variation>
    <location>
        <position position="35"/>
    </location>
</feature>
<feature type="mutagenesis site" description="Loss of iron binding activity." evidence="3">
    <original>C</original>
    <variation>S</variation>
    <location>
        <position position="99"/>
    </location>
</feature>
<feature type="mutagenesis site" description="Loss of iron binding activity." evidence="3">
    <original>C</original>
    <variation>S</variation>
    <location>
        <position position="101"/>
    </location>
</feature>
<feature type="helix" evidence="5">
    <location>
        <begin position="7"/>
        <end position="20"/>
    </location>
</feature>
<feature type="strand" evidence="5">
    <location>
        <begin position="24"/>
        <end position="32"/>
    </location>
</feature>
<feature type="strand" evidence="5">
    <location>
        <begin position="34"/>
        <end position="36"/>
    </location>
</feature>
<feature type="strand" evidence="5">
    <location>
        <begin position="38"/>
        <end position="47"/>
    </location>
</feature>
<feature type="strand" evidence="5">
    <location>
        <begin position="52"/>
        <end position="57"/>
    </location>
</feature>
<feature type="strand" evidence="5">
    <location>
        <begin position="60"/>
        <end position="65"/>
    </location>
</feature>
<feature type="helix" evidence="5">
    <location>
        <begin position="66"/>
        <end position="68"/>
    </location>
</feature>
<feature type="helix" evidence="5">
    <location>
        <begin position="69"/>
        <end position="72"/>
    </location>
</feature>
<feature type="strand" evidence="5">
    <location>
        <begin position="76"/>
        <end position="82"/>
    </location>
</feature>
<feature type="strand" evidence="5">
    <location>
        <begin position="85"/>
        <end position="91"/>
    </location>
</feature>
<feature type="strand" evidence="6">
    <location>
        <begin position="93"/>
        <end position="95"/>
    </location>
</feature>
<keyword id="KW-0002">3D-structure</keyword>
<keyword id="KW-0408">Iron</keyword>
<keyword id="KW-0479">Metal-binding</keyword>
<keyword id="KW-1185">Reference proteome</keyword>
<organism>
    <name type="scientific">Escherichia coli (strain K12)</name>
    <dbReference type="NCBI Taxonomy" id="83333"/>
    <lineage>
        <taxon>Bacteria</taxon>
        <taxon>Pseudomonadati</taxon>
        <taxon>Pseudomonadota</taxon>
        <taxon>Gammaproteobacteria</taxon>
        <taxon>Enterobacterales</taxon>
        <taxon>Enterobacteriaceae</taxon>
        <taxon>Escherichia</taxon>
    </lineage>
</organism>
<reference key="1">
    <citation type="journal article" date="1994" name="J. Bacteriol.">
        <title>Mutations in a gene encoding a new Hsp70 suppress rapid DNA inversion and bgl activation, but not proU derepression, in hns-1 mutant Escherichia coli.</title>
        <authorList>
            <person name="Kawula T.H."/>
            <person name="Lelivelt M.J."/>
        </authorList>
    </citation>
    <scope>NUCLEOTIDE SEQUENCE [GENOMIC DNA]</scope>
    <source>
        <strain>K12</strain>
    </source>
</reference>
<reference key="2">
    <citation type="journal article" date="1997" name="DNA Res.">
        <title>Construction of a contiguous 874-kb sequence of the Escherichia coli-K12 genome corresponding to 50.0-68.8 min on the linkage map and analysis of its sequence features.</title>
        <authorList>
            <person name="Yamamoto Y."/>
            <person name="Aiba H."/>
            <person name="Baba T."/>
            <person name="Hayashi K."/>
            <person name="Inada T."/>
            <person name="Isono K."/>
            <person name="Itoh T."/>
            <person name="Kimura S."/>
            <person name="Kitagawa M."/>
            <person name="Makino K."/>
            <person name="Miki T."/>
            <person name="Mitsuhashi N."/>
            <person name="Mizobuchi K."/>
            <person name="Mori H."/>
            <person name="Nakade S."/>
            <person name="Nakamura Y."/>
            <person name="Nashimoto H."/>
            <person name="Oshima T."/>
            <person name="Oyama S."/>
            <person name="Saito N."/>
            <person name="Sampei G."/>
            <person name="Satoh Y."/>
            <person name="Sivasundaram S."/>
            <person name="Tagami H."/>
            <person name="Takahashi H."/>
            <person name="Takeda J."/>
            <person name="Takemoto K."/>
            <person name="Uehara K."/>
            <person name="Wada C."/>
            <person name="Yamagata S."/>
            <person name="Horiuchi T."/>
        </authorList>
    </citation>
    <scope>NUCLEOTIDE SEQUENCE [LARGE SCALE GENOMIC DNA]</scope>
    <source>
        <strain>K12 / W3110 / ATCC 27325 / DSM 5911</strain>
    </source>
</reference>
<reference key="3">
    <citation type="journal article" date="1997" name="Science">
        <title>The complete genome sequence of Escherichia coli K-12.</title>
        <authorList>
            <person name="Blattner F.R."/>
            <person name="Plunkett G. III"/>
            <person name="Bloch C.A."/>
            <person name="Perna N.T."/>
            <person name="Burland V."/>
            <person name="Riley M."/>
            <person name="Collado-Vides J."/>
            <person name="Glasner J.D."/>
            <person name="Rode C.K."/>
            <person name="Mayhew G.F."/>
            <person name="Gregor J."/>
            <person name="Davis N.W."/>
            <person name="Kirkpatrick H.A."/>
            <person name="Goeden M.A."/>
            <person name="Rose D.J."/>
            <person name="Mau B."/>
            <person name="Shao Y."/>
        </authorList>
    </citation>
    <scope>NUCLEOTIDE SEQUENCE [LARGE SCALE GENOMIC DNA]</scope>
    <source>
        <strain>K12 / MG1655 / ATCC 47076</strain>
    </source>
</reference>
<reference key="4">
    <citation type="journal article" date="2006" name="Mol. Syst. Biol.">
        <title>Highly accurate genome sequences of Escherichia coli K-12 strains MG1655 and W3110.</title>
        <authorList>
            <person name="Hayashi K."/>
            <person name="Morooka N."/>
            <person name="Yamamoto Y."/>
            <person name="Fujita K."/>
            <person name="Isono K."/>
            <person name="Choi S."/>
            <person name="Ohtsubo E."/>
            <person name="Baba T."/>
            <person name="Wanner B.L."/>
            <person name="Mori H."/>
            <person name="Horiuchi T."/>
        </authorList>
    </citation>
    <scope>NUCLEOTIDE SEQUENCE [LARGE SCALE GENOMIC DNA]</scope>
    <source>
        <strain>K12 / W3110 / ATCC 27325 / DSM 5911</strain>
    </source>
</reference>
<reference key="5">
    <citation type="journal article" date="1999" name="Electrophoresis">
        <title>Enrichment of low abundance proteins of Escherichia coli by hydroxyapatite chromatography.</title>
        <authorList>
            <person name="Fountoulakis M."/>
            <person name="Takacs M.-F."/>
            <person name="Berndt P."/>
            <person name="Langen H."/>
            <person name="Takacs B."/>
        </authorList>
    </citation>
    <scope>IDENTIFICATION BY MASS SPECTROMETRY</scope>
    <source>
        <strain>B / BL21</strain>
    </source>
</reference>
<reference key="6">
    <citation type="journal article" date="2001" name="J. Biol. Chem.">
        <title>Iron-sulfur cluster assembly: characterization of IscA and evidence for a specific and functional complex with ferredoxin.</title>
        <authorList>
            <person name="Ollagnier-de-Choudens S."/>
            <person name="Mattioli T."/>
            <person name="Takahashi Y."/>
            <person name="Fontecave M."/>
        </authorList>
    </citation>
    <scope>CHARACTERIZATION AS AN IRON-SULFUR CLUSTER ASSEMBLY PROTEIN</scope>
</reference>
<reference key="7">
    <citation type="journal article" date="2004" name="Biochem. J.">
        <title>Characterization of iron binding in IscA, an ancient iron-sulphur cluster assembly protein.</title>
        <authorList>
            <person name="Ding H."/>
            <person name="Clark R.J."/>
        </authorList>
    </citation>
    <scope>CHARACTERIZATION AS AN IRON-BINDING PROTEIN</scope>
</reference>
<reference key="8">
    <citation type="journal article" date="2004" name="J. Biol. Chem.">
        <title>IscA mediates iron delivery for assembly of iron-sulfur clusters in IscU under the limited accessible free iron conditions.</title>
        <authorList>
            <person name="Ding H."/>
            <person name="Clark R.J."/>
            <person name="Ding B."/>
        </authorList>
    </citation>
    <scope>MUTAGENESIS OF CYS-35; CYS-99 AND CYS-101</scope>
</reference>
<reference key="9">
    <citation type="journal article" date="2005" name="J. Biol. Chem.">
        <title>Multiple turnover transfer of [2Fe2S] clusters by the iron-sulfur cluster assembly scaffold proteins IscU and IscA.</title>
        <authorList>
            <person name="Bonomi F."/>
            <person name="Iametti S."/>
            <person name="Ta D."/>
            <person name="Vickery L.E."/>
        </authorList>
    </citation>
    <scope>TRANSFER OF IRON-SULFUR CLUSTERS</scope>
</reference>
<reference key="10">
    <citation type="journal article" date="2005" name="J. Biol. Chem.">
        <title>Thioredoxin reductase system mediates iron binding in IscA and iron delivery for the iron-sulfur cluster assembly in IscU.</title>
        <authorList>
            <person name="Ding H."/>
            <person name="Harrison K."/>
            <person name="Lu J."/>
        </authorList>
    </citation>
    <scope>ROLE OF THE THIOREDOXIN REDUCTASE SYSTEM</scope>
</reference>
<reference key="11">
    <citation type="journal article" date="2004" name="Biochemistry">
        <title>Crystal structure of the ancient, Fe-S scaffold IscA reveals a novel protein fold.</title>
        <authorList>
            <person name="Bilder P.W."/>
            <person name="Ding H."/>
            <person name="Newcomer M.E."/>
        </authorList>
    </citation>
    <scope>X-RAY CRYSTALLOGRAPHY (2.3 ANGSTROMS) OF 1-105</scope>
    <scope>SUBUNIT</scope>
</reference>
<reference key="12">
    <citation type="journal article" date="2004" name="J. Mol. Biol.">
        <title>Crystal structure of IscA, an iron-sulfur cluster assembly protein from Escherichia coli.</title>
        <authorList>
            <person name="Cupp-Vickery J.R."/>
            <person name="Silberg J.J."/>
            <person name="Ta D.T."/>
            <person name="Vickery L.E."/>
        </authorList>
    </citation>
    <scope>X-RAY CRYSTALLOGRAPHY (2.3 ANGSTROMS)</scope>
    <scope>SUBUNIT</scope>
</reference>
<name>ISCA_ECOLI</name>
<protein>
    <recommendedName>
        <fullName>Iron-binding protein IscA</fullName>
    </recommendedName>
    <alternativeName>
        <fullName>Iron-sulfur cluster assembly protein</fullName>
    </alternativeName>
</protein>
<comment type="function">
    <text>Is able to transfer iron-sulfur clusters to apo-ferredoxin. Multiple cycles of [2Fe2S] cluster formation and transfer are observed, suggesting that IscA acts catalytically. Recruits intracellular free iron so as to provide iron for the assembly of transient iron-sulfur cluster in IscU in the presence of IscS, L-cysteine and the thioredoxin reductase system TrxA/TrxB.</text>
</comment>
<comment type="cofactor">
    <cofactor>
        <name>Fe cation</name>
        <dbReference type="ChEBI" id="CHEBI:24875"/>
    </cofactor>
    <text>Binds 2 iron ions per dimer. The dimer may bind additional iron ions.</text>
</comment>
<comment type="subunit">
    <text evidence="1 2">Homodimer; may form tetramers and higher multimers.</text>
</comment>
<comment type="interaction">
    <interactant intactId="EBI-767026">
        <id>P0AAC8</id>
    </interactant>
    <interactant intactId="EBI-767037">
        <id>P0A9R4</id>
        <label>fdx</label>
    </interactant>
    <organismsDiffer>false</organismsDiffer>
    <experiments>4</experiments>
</comment>
<comment type="induction">
    <text>Repressed by IscR.</text>
</comment>
<comment type="miscellaneous">
    <text>2 iron atoms may bind between dimers.</text>
</comment>
<comment type="similarity">
    <text evidence="4">Belongs to the HesB/IscA family.</text>
</comment>
<comment type="sequence caution" evidence="4">
    <conflict type="frameshift">
        <sequence resource="EMBL" id="U01827"/>
    </conflict>
</comment>
<proteinExistence type="evidence at protein level"/>
<evidence type="ECO:0000269" key="1">
    <source>
    </source>
</evidence>
<evidence type="ECO:0000269" key="2">
    <source>
    </source>
</evidence>
<evidence type="ECO:0000269" key="3">
    <source>
    </source>
</evidence>
<evidence type="ECO:0000305" key="4"/>
<evidence type="ECO:0007829" key="5">
    <source>
        <dbReference type="PDB" id="1R94"/>
    </source>
</evidence>
<evidence type="ECO:0007829" key="6">
    <source>
        <dbReference type="PDB" id="1R95"/>
    </source>
</evidence>
<sequence>MSITLSDSAAARVNTFLANRGKGFGLRLGVRTSGCSGMAYVLEFVDEPTPEDIVFEDKGVKVVVDGKSLQFLDGTQLDFVKEGLNEGFKFTNPNVKDECGCGESFHV</sequence>
<accession>P0AAC8</accession>
<accession>P36539</accession>
<accession>P77691</accession>
<dbReference type="EMBL" id="U01827">
    <property type="status" value="NOT_ANNOTATED_CDS"/>
    <property type="molecule type" value="Unassigned_DNA"/>
</dbReference>
<dbReference type="EMBL" id="U00096">
    <property type="protein sequence ID" value="AAC75581.1"/>
    <property type="molecule type" value="Genomic_DNA"/>
</dbReference>
<dbReference type="EMBL" id="AP009048">
    <property type="protein sequence ID" value="BAA16422.1"/>
    <property type="molecule type" value="Genomic_DNA"/>
</dbReference>
<dbReference type="PIR" id="G65029">
    <property type="entry name" value="G65029"/>
</dbReference>
<dbReference type="RefSeq" id="NP_417023.1">
    <property type="nucleotide sequence ID" value="NC_000913.3"/>
</dbReference>
<dbReference type="RefSeq" id="WP_000028953.1">
    <property type="nucleotide sequence ID" value="NZ_STEB01000011.1"/>
</dbReference>
<dbReference type="PDB" id="1R94">
    <property type="method" value="X-ray"/>
    <property type="resolution" value="2.30 A"/>
    <property type="chains" value="A/B=1-105"/>
</dbReference>
<dbReference type="PDB" id="1R95">
    <property type="method" value="X-ray"/>
    <property type="resolution" value="2.65 A"/>
    <property type="chains" value="A/B=1-105"/>
</dbReference>
<dbReference type="PDB" id="1S98">
    <property type="method" value="X-ray"/>
    <property type="resolution" value="2.30 A"/>
    <property type="chains" value="A/B=1-107"/>
</dbReference>
<dbReference type="PDBsum" id="1R94"/>
<dbReference type="PDBsum" id="1R95"/>
<dbReference type="PDBsum" id="1S98"/>
<dbReference type="SMR" id="P0AAC8"/>
<dbReference type="BioGRID" id="4260603">
    <property type="interactions" value="38"/>
</dbReference>
<dbReference type="BioGRID" id="851338">
    <property type="interactions" value="1"/>
</dbReference>
<dbReference type="ComplexPortal" id="CPX-2132">
    <property type="entry name" value="IscA complex"/>
</dbReference>
<dbReference type="DIP" id="DIP-35854N"/>
<dbReference type="FunCoup" id="P0AAC8">
    <property type="interactions" value="564"/>
</dbReference>
<dbReference type="IntAct" id="P0AAC8">
    <property type="interactions" value="5"/>
</dbReference>
<dbReference type="STRING" id="511145.b2528"/>
<dbReference type="jPOST" id="P0AAC8"/>
<dbReference type="PaxDb" id="511145-b2528"/>
<dbReference type="EnsemblBacteria" id="AAC75581">
    <property type="protein sequence ID" value="AAC75581"/>
    <property type="gene ID" value="b2528"/>
</dbReference>
<dbReference type="GeneID" id="93774608"/>
<dbReference type="GeneID" id="946999"/>
<dbReference type="KEGG" id="ecj:JW2512"/>
<dbReference type="KEGG" id="eco:b2528"/>
<dbReference type="KEGG" id="ecoc:C3026_14010"/>
<dbReference type="PATRIC" id="fig|1411691.4.peg.4206"/>
<dbReference type="EchoBASE" id="EB2053"/>
<dbReference type="eggNOG" id="COG0316">
    <property type="taxonomic scope" value="Bacteria"/>
</dbReference>
<dbReference type="HOGENOM" id="CLU_069054_5_1_6"/>
<dbReference type="InParanoid" id="P0AAC8"/>
<dbReference type="OMA" id="GCAGQEY"/>
<dbReference type="OrthoDB" id="9801228at2"/>
<dbReference type="PhylomeDB" id="P0AAC8"/>
<dbReference type="BioCyc" id="EcoCyc:EG12132-MONOMER"/>
<dbReference type="BioCyc" id="MetaCyc:EG12132-MONOMER"/>
<dbReference type="EvolutionaryTrace" id="P0AAC8"/>
<dbReference type="PRO" id="PR:P0AAC8"/>
<dbReference type="Proteomes" id="UP000000625">
    <property type="component" value="Chromosome"/>
</dbReference>
<dbReference type="GO" id="GO:0005737">
    <property type="term" value="C:cytoplasm"/>
    <property type="evidence" value="ECO:0000318"/>
    <property type="project" value="GO_Central"/>
</dbReference>
<dbReference type="GO" id="GO:0005829">
    <property type="term" value="C:cytosol"/>
    <property type="evidence" value="ECO:0000314"/>
    <property type="project" value="EcoCyc"/>
</dbReference>
<dbReference type="GO" id="GO:1990230">
    <property type="term" value="C:iron-sulfur cluster transfer complex"/>
    <property type="evidence" value="ECO:0000353"/>
    <property type="project" value="ComplexPortal"/>
</dbReference>
<dbReference type="GO" id="GO:0051537">
    <property type="term" value="F:2 iron, 2 sulfur cluster binding"/>
    <property type="evidence" value="ECO:0000314"/>
    <property type="project" value="UniProtKB"/>
</dbReference>
<dbReference type="GO" id="GO:0008198">
    <property type="term" value="F:ferrous iron binding"/>
    <property type="evidence" value="ECO:0000314"/>
    <property type="project" value="EcoCyc"/>
</dbReference>
<dbReference type="GO" id="GO:0034986">
    <property type="term" value="F:iron chaperone activity"/>
    <property type="evidence" value="ECO:0000314"/>
    <property type="project" value="EcoCyc"/>
</dbReference>
<dbReference type="GO" id="GO:0016226">
    <property type="term" value="P:iron-sulfur cluster assembly"/>
    <property type="evidence" value="ECO:0000314"/>
    <property type="project" value="UniProtKB"/>
</dbReference>
<dbReference type="FunFam" id="2.60.300.12:FF:000001">
    <property type="entry name" value="Iron-binding protein IscA"/>
    <property type="match status" value="1"/>
</dbReference>
<dbReference type="Gene3D" id="2.60.300.12">
    <property type="entry name" value="HesB-like domain"/>
    <property type="match status" value="1"/>
</dbReference>
<dbReference type="HAMAP" id="MF_01429">
    <property type="entry name" value="Fe_S_insert_IscA"/>
    <property type="match status" value="1"/>
</dbReference>
<dbReference type="InterPro" id="IPR050322">
    <property type="entry name" value="Fe-S_cluster_asmbl/transfer"/>
</dbReference>
<dbReference type="InterPro" id="IPR000361">
    <property type="entry name" value="FeS_biogenesis"/>
</dbReference>
<dbReference type="InterPro" id="IPR016092">
    <property type="entry name" value="FeS_cluster_insertion"/>
</dbReference>
<dbReference type="InterPro" id="IPR017870">
    <property type="entry name" value="FeS_cluster_insertion_CS"/>
</dbReference>
<dbReference type="InterPro" id="IPR035903">
    <property type="entry name" value="HesB-like_dom_sf"/>
</dbReference>
<dbReference type="InterPro" id="IPR011302">
    <property type="entry name" value="IscA_proteobacteria"/>
</dbReference>
<dbReference type="NCBIfam" id="TIGR00049">
    <property type="entry name" value="iron-sulfur cluster assembly accessory protein"/>
    <property type="match status" value="1"/>
</dbReference>
<dbReference type="NCBIfam" id="TIGR02011">
    <property type="entry name" value="IscA"/>
    <property type="match status" value="1"/>
</dbReference>
<dbReference type="NCBIfam" id="NF007049">
    <property type="entry name" value="PRK09502.1"/>
    <property type="match status" value="1"/>
</dbReference>
<dbReference type="PANTHER" id="PTHR10072:SF41">
    <property type="entry name" value="IRON-SULFUR CLUSTER ASSEMBLY 1 HOMOLOG, MITOCHONDRIAL"/>
    <property type="match status" value="1"/>
</dbReference>
<dbReference type="PANTHER" id="PTHR10072">
    <property type="entry name" value="IRON-SULFUR CLUSTER ASSEMBLY PROTEIN"/>
    <property type="match status" value="1"/>
</dbReference>
<dbReference type="Pfam" id="PF01521">
    <property type="entry name" value="Fe-S_biosyn"/>
    <property type="match status" value="1"/>
</dbReference>
<dbReference type="SUPFAM" id="SSF89360">
    <property type="entry name" value="HesB-like domain"/>
    <property type="match status" value="1"/>
</dbReference>
<dbReference type="PROSITE" id="PS01152">
    <property type="entry name" value="HESB"/>
    <property type="match status" value="1"/>
</dbReference>
<gene>
    <name type="primary">iscA</name>
    <name type="synonym">yfhF</name>
    <name type="ordered locus">b2528</name>
    <name type="ordered locus">JW2512</name>
</gene>